<feature type="chain" id="PRO_0000298830" description="NADH-quinone oxidoreductase subunit H">
    <location>
        <begin position="1"/>
        <end position="411"/>
    </location>
</feature>
<feature type="transmembrane region" description="Helical" evidence="1">
    <location>
        <begin position="18"/>
        <end position="38"/>
    </location>
</feature>
<feature type="transmembrane region" description="Helical" evidence="1">
    <location>
        <begin position="84"/>
        <end position="104"/>
    </location>
</feature>
<feature type="transmembrane region" description="Helical" evidence="1">
    <location>
        <begin position="124"/>
        <end position="144"/>
    </location>
</feature>
<feature type="transmembrane region" description="Helical" evidence="1">
    <location>
        <begin position="165"/>
        <end position="185"/>
    </location>
</feature>
<feature type="transmembrane region" description="Helical" evidence="1">
    <location>
        <begin position="198"/>
        <end position="218"/>
    </location>
</feature>
<feature type="transmembrane region" description="Helical" evidence="1">
    <location>
        <begin position="260"/>
        <end position="280"/>
    </location>
</feature>
<feature type="transmembrane region" description="Helical" evidence="1">
    <location>
        <begin position="288"/>
        <end position="308"/>
    </location>
</feature>
<feature type="transmembrane region" description="Helical" evidence="1">
    <location>
        <begin position="321"/>
        <end position="341"/>
    </location>
</feature>
<feature type="transmembrane region" description="Helical" evidence="1">
    <location>
        <begin position="352"/>
        <end position="372"/>
    </location>
</feature>
<accession>A1T699</accession>
<keyword id="KW-1003">Cell membrane</keyword>
<keyword id="KW-0472">Membrane</keyword>
<keyword id="KW-0520">NAD</keyword>
<keyword id="KW-0874">Quinone</keyword>
<keyword id="KW-1278">Translocase</keyword>
<keyword id="KW-0812">Transmembrane</keyword>
<keyword id="KW-1133">Transmembrane helix</keyword>
<comment type="function">
    <text evidence="1">NDH-1 shuttles electrons from NADH, via FMN and iron-sulfur (Fe-S) centers, to quinones in the respiratory chain. The immediate electron acceptor for the enzyme in this species is believed to be menaquinone. Couples the redox reaction to proton translocation (for every two electrons transferred, four hydrogen ions are translocated across the cytoplasmic membrane), and thus conserves the redox energy in a proton gradient. This subunit may bind ubiquinone (By similarity).</text>
</comment>
<comment type="catalytic activity">
    <reaction evidence="1">
        <text>a quinone + NADH + 5 H(+)(in) = a quinol + NAD(+) + 4 H(+)(out)</text>
        <dbReference type="Rhea" id="RHEA:57888"/>
        <dbReference type="ChEBI" id="CHEBI:15378"/>
        <dbReference type="ChEBI" id="CHEBI:24646"/>
        <dbReference type="ChEBI" id="CHEBI:57540"/>
        <dbReference type="ChEBI" id="CHEBI:57945"/>
        <dbReference type="ChEBI" id="CHEBI:132124"/>
    </reaction>
</comment>
<comment type="subunit">
    <text evidence="1">NDH-1 is composed of 14 different subunits. Subunits NuoA, H, J, K, L, M, N constitute the membrane sector of the complex.</text>
</comment>
<comment type="subcellular location">
    <subcellularLocation>
        <location evidence="1">Cell membrane</location>
        <topology evidence="1">Multi-pass membrane protein</topology>
    </subcellularLocation>
</comment>
<comment type="similarity">
    <text evidence="1">Belongs to the complex I subunit 1 family.</text>
</comment>
<organism>
    <name type="scientific">Mycolicibacterium vanbaalenii (strain DSM 7251 / JCM 13017 / BCRC 16820 / KCTC 9966 / NRRL B-24157 / PYR-1)</name>
    <name type="common">Mycobacterium vanbaalenii</name>
    <dbReference type="NCBI Taxonomy" id="350058"/>
    <lineage>
        <taxon>Bacteria</taxon>
        <taxon>Bacillati</taxon>
        <taxon>Actinomycetota</taxon>
        <taxon>Actinomycetes</taxon>
        <taxon>Mycobacteriales</taxon>
        <taxon>Mycobacteriaceae</taxon>
        <taxon>Mycolicibacterium</taxon>
    </lineage>
</organism>
<evidence type="ECO:0000255" key="1">
    <source>
        <dbReference type="HAMAP-Rule" id="MF_01350"/>
    </source>
</evidence>
<reference key="1">
    <citation type="submission" date="2006-12" db="EMBL/GenBank/DDBJ databases">
        <title>Complete sequence of Mycobacterium vanbaalenii PYR-1.</title>
        <authorList>
            <consortium name="US DOE Joint Genome Institute"/>
            <person name="Copeland A."/>
            <person name="Lucas S."/>
            <person name="Lapidus A."/>
            <person name="Barry K."/>
            <person name="Detter J.C."/>
            <person name="Glavina del Rio T."/>
            <person name="Hammon N."/>
            <person name="Israni S."/>
            <person name="Dalin E."/>
            <person name="Tice H."/>
            <person name="Pitluck S."/>
            <person name="Singan V."/>
            <person name="Schmutz J."/>
            <person name="Larimer F."/>
            <person name="Land M."/>
            <person name="Hauser L."/>
            <person name="Kyrpides N."/>
            <person name="Anderson I.J."/>
            <person name="Miller C."/>
            <person name="Richardson P."/>
        </authorList>
    </citation>
    <scope>NUCLEOTIDE SEQUENCE [LARGE SCALE GENOMIC DNA]</scope>
    <source>
        <strain>DSM 7251 / JCM 13017 / BCRC 16820 / KCTC 9966 / NRRL B-24157 / PYR-1</strain>
    </source>
</reference>
<dbReference type="EC" id="7.1.1.-" evidence="1"/>
<dbReference type="EMBL" id="CP000511">
    <property type="protein sequence ID" value="ABM12699.1"/>
    <property type="molecule type" value="Genomic_DNA"/>
</dbReference>
<dbReference type="RefSeq" id="WP_011779117.1">
    <property type="nucleotide sequence ID" value="NZ_JACKSD010000325.1"/>
</dbReference>
<dbReference type="SMR" id="A1T699"/>
<dbReference type="STRING" id="350058.Mvan_1878"/>
<dbReference type="KEGG" id="mva:Mvan_1878"/>
<dbReference type="eggNOG" id="COG1005">
    <property type="taxonomic scope" value="Bacteria"/>
</dbReference>
<dbReference type="HOGENOM" id="CLU_015134_0_0_11"/>
<dbReference type="Proteomes" id="UP000009159">
    <property type="component" value="Chromosome"/>
</dbReference>
<dbReference type="GO" id="GO:0005886">
    <property type="term" value="C:plasma membrane"/>
    <property type="evidence" value="ECO:0007669"/>
    <property type="project" value="UniProtKB-SubCell"/>
</dbReference>
<dbReference type="GO" id="GO:0003954">
    <property type="term" value="F:NADH dehydrogenase activity"/>
    <property type="evidence" value="ECO:0007669"/>
    <property type="project" value="TreeGrafter"/>
</dbReference>
<dbReference type="GO" id="GO:0016655">
    <property type="term" value="F:oxidoreductase activity, acting on NAD(P)H, quinone or similar compound as acceptor"/>
    <property type="evidence" value="ECO:0007669"/>
    <property type="project" value="UniProtKB-UniRule"/>
</dbReference>
<dbReference type="GO" id="GO:0048038">
    <property type="term" value="F:quinone binding"/>
    <property type="evidence" value="ECO:0007669"/>
    <property type="project" value="UniProtKB-KW"/>
</dbReference>
<dbReference type="GO" id="GO:0009060">
    <property type="term" value="P:aerobic respiration"/>
    <property type="evidence" value="ECO:0007669"/>
    <property type="project" value="TreeGrafter"/>
</dbReference>
<dbReference type="HAMAP" id="MF_01350">
    <property type="entry name" value="NDH1_NuoH"/>
    <property type="match status" value="1"/>
</dbReference>
<dbReference type="InterPro" id="IPR001694">
    <property type="entry name" value="NADH_UbQ_OxRdtase_su1/FPO"/>
</dbReference>
<dbReference type="InterPro" id="IPR018086">
    <property type="entry name" value="NADH_UbQ_OxRdtase_su1_CS"/>
</dbReference>
<dbReference type="NCBIfam" id="NF004741">
    <property type="entry name" value="PRK06076.1-2"/>
    <property type="match status" value="1"/>
</dbReference>
<dbReference type="NCBIfam" id="NF004743">
    <property type="entry name" value="PRK06076.1-4"/>
    <property type="match status" value="1"/>
</dbReference>
<dbReference type="PANTHER" id="PTHR11432">
    <property type="entry name" value="NADH DEHYDROGENASE SUBUNIT 1"/>
    <property type="match status" value="1"/>
</dbReference>
<dbReference type="PANTHER" id="PTHR11432:SF3">
    <property type="entry name" value="NADH-UBIQUINONE OXIDOREDUCTASE CHAIN 1"/>
    <property type="match status" value="1"/>
</dbReference>
<dbReference type="Pfam" id="PF00146">
    <property type="entry name" value="NADHdh"/>
    <property type="match status" value="1"/>
</dbReference>
<dbReference type="PROSITE" id="PS00667">
    <property type="entry name" value="COMPLEX1_ND1_1"/>
    <property type="match status" value="1"/>
</dbReference>
<dbReference type="PROSITE" id="PS00668">
    <property type="entry name" value="COMPLEX1_ND1_2"/>
    <property type="match status" value="1"/>
</dbReference>
<sequence>MTYPDPTLFGHDPWWLVLAKSLGIFAFLLLTVLAAILIERKVLGRMQLRFGPNRVGPHGLLQSLADGVKLALKEGLVPAGVDKWIYLAAPIISVIPAFMAFAVIPMGGEVSVFGHRTALQLTDLPVAVLYILAVTSIGVYGIVLAGWASGSVYPLLGGLRSSAQVISYEIAMALSFAAVFIYAGTMSTSGIVAAQNDTWYIVLLLPSFLVYVTAMVGETNRAPFDLPEAEGELVGGFHTEYSSLKFAMFMLAEYVNMTTVSALATTLFLGGWHAPWPISIADGANSGWWPLLWFTVKVWLFLFFFMWLRATLPRMRYDQFMALGWKILIPVSLGWIMIVAITHSLRDQGYQAPATAAIGLAVAAVILLALLGRSRLRARRIRPEPIRPAGDGAFPVPPLPVKTRALEDADA</sequence>
<protein>
    <recommendedName>
        <fullName evidence="1">NADH-quinone oxidoreductase subunit H</fullName>
        <ecNumber evidence="1">7.1.1.-</ecNumber>
    </recommendedName>
    <alternativeName>
        <fullName evidence="1">NADH dehydrogenase I subunit H</fullName>
    </alternativeName>
    <alternativeName>
        <fullName evidence="1">NDH-1 subunit H</fullName>
    </alternativeName>
</protein>
<name>NUOH_MYCVP</name>
<gene>
    <name evidence="1" type="primary">nuoH</name>
    <name type="ordered locus">Mvan_1878</name>
</gene>
<proteinExistence type="inferred from homology"/>